<name>PYRH_BAUCH</name>
<evidence type="ECO:0000255" key="1">
    <source>
        <dbReference type="HAMAP-Rule" id="MF_01220"/>
    </source>
</evidence>
<reference key="1">
    <citation type="journal article" date="2006" name="PLoS Biol.">
        <title>Metabolic complementarity and genomics of the dual bacterial symbiosis of sharpshooters.</title>
        <authorList>
            <person name="Wu D."/>
            <person name="Daugherty S.C."/>
            <person name="Van Aken S.E."/>
            <person name="Pai G.H."/>
            <person name="Watkins K.L."/>
            <person name="Khouri H."/>
            <person name="Tallon L.J."/>
            <person name="Zaborsky J.M."/>
            <person name="Dunbar H.E."/>
            <person name="Tran P.L."/>
            <person name="Moran N.A."/>
            <person name="Eisen J.A."/>
        </authorList>
    </citation>
    <scope>NUCLEOTIDE SEQUENCE [LARGE SCALE GENOMIC DNA]</scope>
</reference>
<accession>Q1LSV5</accession>
<protein>
    <recommendedName>
        <fullName evidence="1">Uridylate kinase</fullName>
        <shortName evidence="1">UK</shortName>
        <ecNumber evidence="1">2.7.4.22</ecNumber>
    </recommendedName>
    <alternativeName>
        <fullName evidence="1">Uridine monophosphate kinase</fullName>
        <shortName evidence="1">UMP kinase</shortName>
        <shortName evidence="1">UMPK</shortName>
    </alternativeName>
</protein>
<feature type="chain" id="PRO_0000323792" description="Uridylate kinase">
    <location>
        <begin position="1"/>
        <end position="249"/>
    </location>
</feature>
<feature type="binding site" evidence="1">
    <location>
        <begin position="13"/>
        <end position="16"/>
    </location>
    <ligand>
        <name>ATP</name>
        <dbReference type="ChEBI" id="CHEBI:30616"/>
    </ligand>
</feature>
<feature type="binding site" evidence="1">
    <location>
        <position position="55"/>
    </location>
    <ligand>
        <name>UMP</name>
        <dbReference type="ChEBI" id="CHEBI:57865"/>
    </ligand>
</feature>
<feature type="binding site" evidence="1">
    <location>
        <position position="56"/>
    </location>
    <ligand>
        <name>ATP</name>
        <dbReference type="ChEBI" id="CHEBI:30616"/>
    </ligand>
</feature>
<feature type="binding site" evidence="1">
    <location>
        <position position="60"/>
    </location>
    <ligand>
        <name>ATP</name>
        <dbReference type="ChEBI" id="CHEBI:30616"/>
    </ligand>
</feature>
<feature type="binding site" evidence="1">
    <location>
        <position position="75"/>
    </location>
    <ligand>
        <name>UMP</name>
        <dbReference type="ChEBI" id="CHEBI:57865"/>
    </ligand>
</feature>
<feature type="binding site" evidence="1">
    <location>
        <begin position="136"/>
        <end position="143"/>
    </location>
    <ligand>
        <name>UMP</name>
        <dbReference type="ChEBI" id="CHEBI:57865"/>
    </ligand>
</feature>
<feature type="binding site" evidence="1">
    <location>
        <position position="163"/>
    </location>
    <ligand>
        <name>ATP</name>
        <dbReference type="ChEBI" id="CHEBI:30616"/>
    </ligand>
</feature>
<feature type="binding site" evidence="1">
    <location>
        <position position="169"/>
    </location>
    <ligand>
        <name>ATP</name>
        <dbReference type="ChEBI" id="CHEBI:30616"/>
    </ligand>
</feature>
<feature type="binding site" evidence="1">
    <location>
        <position position="172"/>
    </location>
    <ligand>
        <name>ATP</name>
        <dbReference type="ChEBI" id="CHEBI:30616"/>
    </ligand>
</feature>
<gene>
    <name evidence="1" type="primary">pyrH</name>
    <name type="ordered locus">BCI_0529</name>
</gene>
<keyword id="KW-0067">ATP-binding</keyword>
<keyword id="KW-0963">Cytoplasm</keyword>
<keyword id="KW-0418">Kinase</keyword>
<keyword id="KW-0547">Nucleotide-binding</keyword>
<keyword id="KW-0665">Pyrimidine biosynthesis</keyword>
<keyword id="KW-1185">Reference proteome</keyword>
<keyword id="KW-0808">Transferase</keyword>
<organism>
    <name type="scientific">Baumannia cicadellinicola subsp. Homalodisca coagulata</name>
    <dbReference type="NCBI Taxonomy" id="374463"/>
    <lineage>
        <taxon>Bacteria</taxon>
        <taxon>Pseudomonadati</taxon>
        <taxon>Pseudomonadota</taxon>
        <taxon>Gammaproteobacteria</taxon>
        <taxon>Candidatus Palibaumannia</taxon>
    </lineage>
</organism>
<comment type="function">
    <text evidence="1">Catalyzes the reversible phosphorylation of UMP to UDP.</text>
</comment>
<comment type="catalytic activity">
    <reaction evidence="1">
        <text>UMP + ATP = UDP + ADP</text>
        <dbReference type="Rhea" id="RHEA:24400"/>
        <dbReference type="ChEBI" id="CHEBI:30616"/>
        <dbReference type="ChEBI" id="CHEBI:57865"/>
        <dbReference type="ChEBI" id="CHEBI:58223"/>
        <dbReference type="ChEBI" id="CHEBI:456216"/>
        <dbReference type="EC" id="2.7.4.22"/>
    </reaction>
</comment>
<comment type="activity regulation">
    <text evidence="1">Inhibited by UTP.</text>
</comment>
<comment type="pathway">
    <text evidence="1">Pyrimidine metabolism; CTP biosynthesis via de novo pathway; UDP from UMP (UMPK route): step 1/1.</text>
</comment>
<comment type="subunit">
    <text evidence="1">Homohexamer.</text>
</comment>
<comment type="subcellular location">
    <subcellularLocation>
        <location evidence="1">Cytoplasm</location>
    </subcellularLocation>
</comment>
<comment type="similarity">
    <text evidence="1">Belongs to the UMP kinase family.</text>
</comment>
<sequence>MTIKPIYQRILLKLSGEALQGKNNFGIDTNALNRIVQEIKELIKFKINIGIVIGGGNLFRGTLLAHLGIQRVVCDHMGMLATVINSLAIRNTMLHININANILSAIPLDGICELYNLDKAIDLLEKNIVVIFAAGIGNPFFTTDSAACLRGLEIGADVVLKATKVDGVFSADPKIDPDAILYDQLNYKDILKQELKIMDLTALTLAHDNHLPIRVFNINKPGALWRVVMGKKEGTLIYTPKINKVNYNI</sequence>
<dbReference type="EC" id="2.7.4.22" evidence="1"/>
<dbReference type="EMBL" id="CP000238">
    <property type="protein sequence ID" value="ABF13862.1"/>
    <property type="molecule type" value="Genomic_DNA"/>
</dbReference>
<dbReference type="RefSeq" id="WP_011520692.1">
    <property type="nucleotide sequence ID" value="NC_007984.1"/>
</dbReference>
<dbReference type="SMR" id="Q1LSV5"/>
<dbReference type="STRING" id="374463.BCI_0529"/>
<dbReference type="KEGG" id="bci:BCI_0529"/>
<dbReference type="HOGENOM" id="CLU_033861_0_0_6"/>
<dbReference type="OrthoDB" id="9807458at2"/>
<dbReference type="UniPathway" id="UPA00159">
    <property type="reaction ID" value="UER00275"/>
</dbReference>
<dbReference type="Proteomes" id="UP000002427">
    <property type="component" value="Chromosome"/>
</dbReference>
<dbReference type="GO" id="GO:0005829">
    <property type="term" value="C:cytosol"/>
    <property type="evidence" value="ECO:0007669"/>
    <property type="project" value="TreeGrafter"/>
</dbReference>
<dbReference type="GO" id="GO:0005524">
    <property type="term" value="F:ATP binding"/>
    <property type="evidence" value="ECO:0007669"/>
    <property type="project" value="UniProtKB-KW"/>
</dbReference>
<dbReference type="GO" id="GO:0033862">
    <property type="term" value="F:UMP kinase activity"/>
    <property type="evidence" value="ECO:0007669"/>
    <property type="project" value="UniProtKB-EC"/>
</dbReference>
<dbReference type="GO" id="GO:0044210">
    <property type="term" value="P:'de novo' CTP biosynthetic process"/>
    <property type="evidence" value="ECO:0007669"/>
    <property type="project" value="UniProtKB-UniRule"/>
</dbReference>
<dbReference type="GO" id="GO:0006225">
    <property type="term" value="P:UDP biosynthetic process"/>
    <property type="evidence" value="ECO:0007669"/>
    <property type="project" value="TreeGrafter"/>
</dbReference>
<dbReference type="CDD" id="cd04254">
    <property type="entry name" value="AAK_UMPK-PyrH-Ec"/>
    <property type="match status" value="1"/>
</dbReference>
<dbReference type="FunFam" id="3.40.1160.10:FF:000001">
    <property type="entry name" value="Uridylate kinase"/>
    <property type="match status" value="1"/>
</dbReference>
<dbReference type="Gene3D" id="3.40.1160.10">
    <property type="entry name" value="Acetylglutamate kinase-like"/>
    <property type="match status" value="1"/>
</dbReference>
<dbReference type="HAMAP" id="MF_01220_B">
    <property type="entry name" value="PyrH_B"/>
    <property type="match status" value="1"/>
</dbReference>
<dbReference type="InterPro" id="IPR036393">
    <property type="entry name" value="AceGlu_kinase-like_sf"/>
</dbReference>
<dbReference type="InterPro" id="IPR001048">
    <property type="entry name" value="Asp/Glu/Uridylate_kinase"/>
</dbReference>
<dbReference type="InterPro" id="IPR011817">
    <property type="entry name" value="Uridylate_kinase"/>
</dbReference>
<dbReference type="InterPro" id="IPR015963">
    <property type="entry name" value="Uridylate_kinase_bac"/>
</dbReference>
<dbReference type="NCBIfam" id="TIGR02075">
    <property type="entry name" value="pyrH_bact"/>
    <property type="match status" value="1"/>
</dbReference>
<dbReference type="PANTHER" id="PTHR42833">
    <property type="entry name" value="URIDYLATE KINASE"/>
    <property type="match status" value="1"/>
</dbReference>
<dbReference type="PANTHER" id="PTHR42833:SF4">
    <property type="entry name" value="URIDYLATE KINASE PUMPKIN, CHLOROPLASTIC"/>
    <property type="match status" value="1"/>
</dbReference>
<dbReference type="Pfam" id="PF00696">
    <property type="entry name" value="AA_kinase"/>
    <property type="match status" value="1"/>
</dbReference>
<dbReference type="PIRSF" id="PIRSF005650">
    <property type="entry name" value="Uridylate_kin"/>
    <property type="match status" value="1"/>
</dbReference>
<dbReference type="SUPFAM" id="SSF53633">
    <property type="entry name" value="Carbamate kinase-like"/>
    <property type="match status" value="1"/>
</dbReference>
<proteinExistence type="inferred from homology"/>